<keyword id="KW-1185">Reference proteome</keyword>
<dbReference type="EMBL" id="CDHK01000006">
    <property type="protein sequence ID" value="CEJ58140.1"/>
    <property type="molecule type" value="Genomic_DNA"/>
</dbReference>
<dbReference type="SMR" id="A0A0F7TRU0"/>
<dbReference type="STRING" id="104259.A0A0F7TRU0"/>
<dbReference type="OrthoDB" id="3758478at2759"/>
<dbReference type="UniPathway" id="UPA00213"/>
<dbReference type="Proteomes" id="UP000042958">
    <property type="component" value="Unassembled WGS sequence"/>
</dbReference>
<dbReference type="GO" id="GO:0016114">
    <property type="term" value="P:terpenoid biosynthetic process"/>
    <property type="evidence" value="ECO:0007669"/>
    <property type="project" value="UniProtKB-UniPathway"/>
</dbReference>
<dbReference type="Gene3D" id="3.10.450.50">
    <property type="match status" value="1"/>
</dbReference>
<dbReference type="InterPro" id="IPR050977">
    <property type="entry name" value="Fungal_Meroterpenoid_Isomerase"/>
</dbReference>
<dbReference type="InterPro" id="IPR032710">
    <property type="entry name" value="NTF2-like_dom_sf"/>
</dbReference>
<dbReference type="PANTHER" id="PTHR39598:SF1">
    <property type="entry name" value="AUSTINOID BIOSYNTHESIS CLUSTERS PROTEIN F-RELATED"/>
    <property type="match status" value="1"/>
</dbReference>
<dbReference type="PANTHER" id="PTHR39598">
    <property type="entry name" value="AUSTINOL SYNTHESIS PROTEIN F-RELATED"/>
    <property type="match status" value="1"/>
</dbReference>
<dbReference type="SUPFAM" id="SSF54427">
    <property type="entry name" value="NTF2-like"/>
    <property type="match status" value="1"/>
</dbReference>
<reference key="1">
    <citation type="journal article" date="2015" name="Genome Announc.">
        <title>Draft genome sequence of the fungus Penicillium brasilianum MG11.</title>
        <authorList>
            <person name="Horn F."/>
            <person name="Linde J."/>
            <person name="Mattern D.J."/>
            <person name="Walther G."/>
            <person name="Guthke R."/>
            <person name="Brakhage A.A."/>
            <person name="Valiante V."/>
        </authorList>
    </citation>
    <scope>NUCLEOTIDE SEQUENCE [LARGE SCALE GENOMIC DNA]</scope>
    <source>
        <strain>MG11</strain>
    </source>
</reference>
<reference key="2">
    <citation type="journal article" date="2016" name="J. Am. Chem. Soc.">
        <title>Discovery of key dioxygenases that diverged the paraherquonin and acetoxydehydroaustin pathways in Penicillium brasilianum.</title>
        <authorList>
            <person name="Matsuda Y."/>
            <person name="Iwabuchi T."/>
            <person name="Fujimoto T."/>
            <person name="Awakawa T."/>
            <person name="Nakashima Y."/>
            <person name="Mori T."/>
            <person name="Zhang H."/>
            <person name="Hayashi F."/>
            <person name="Abe I."/>
        </authorList>
    </citation>
    <scope>FUNCTION</scope>
</reference>
<reference key="3">
    <citation type="journal article" date="2017" name="ACS Chem. Biol.">
        <title>Rewiring of the austinoid biosynthetic pathway in filamentous fungi.</title>
        <authorList>
            <person name="Mattern D.J."/>
            <person name="Valiante V."/>
            <person name="Horn F."/>
            <person name="Petzke L."/>
            <person name="Brakhage A.A."/>
        </authorList>
    </citation>
    <scope>FUNCTION</scope>
</reference>
<proteinExistence type="inferred from homology"/>
<accession>A0A0F7TRU0</accession>
<sequence length="147" mass="16555">MSPTRDELLCTALDFVAQFAKLDPESVLSFLSPSCTLRSFPSSLGKPPLQTKEESKADFQGLKDFFHNFQLRVKDGAEPVVDEPARKVVLHIEGKGDSLVGRFETEYIYILQMNEEGTMVEDFFQFADSATRDAWGKKIEAHFSAKN</sequence>
<name>AUSH_PENBI</name>
<feature type="chain" id="PRO_0000453831" description="Austinoid biosynthesis clusters protein H">
    <location>
        <begin position="1"/>
        <end position="147"/>
    </location>
</feature>
<gene>
    <name evidence="3" type="primary">ausH</name>
    <name type="ORF">PMG11_06810</name>
</gene>
<comment type="function">
    <text evidence="1 2">Part of the gene cluster B that mediates the biosynthesis of the fungal meroterpenoid acetoxydehydroaustin (PubMed:29076725). The first step of the pathway is the synthesis of 3,5-dimethylorsellinic acid by the polyketide synthase ausA (By similarity). 3,5-dimethylorsellinic acid is then prenylated by the polyprenyl transferase ausN (By similarity). Further epoxidation by the FAD-dependent monooxygenase ausM and cyclization by the probable terpene cyclase ausL lead to the formation of protoaustinoid A (By similarity). Protoaustinoid A is then oxidized to spiro-lactone preaustinoid A3 by the combined action of the FAD-binding monooxygenases ausB and ausC, and the dioxygenase ausE (By similarity). Acid-catalyzed keto-rearrangement and ring contraction of the tetraketide portion of preaustinoid A3 by ausJ lead to the formation of preaustinoid A4 (By similarity). The aldo-keto reductase ausK, with the help of ausH, is involved in the next step by transforming preaustinoid A4 into isoaustinone which is in turn hydroxylated by the P450 monooxygenase ausI to form austinolide (By similarity). The cytochrome P450 monooxygenase ausG then modifies austinolide to austinol (By similarity). Austinol is further acetylated to austin by the O-acetyltransferase ausP, which spontaneously changes to dehydroaustin (PubMed:29076725). The cytochrome P450 monooxygenase then converts dehydroaustin is into 7-dehydrodehydroaustin (PubMed:29076725). The hydroxylation catalyzed by ausR permits the second O-acetyltransferase ausQ to add an additional acetyl group to the molecule, leading to the formation of acetoxydehydroaustin (PubMed:29076725). Due to genetic rearrangements of the clusters and the subsequent loss of some enzymes, the end product of the Penicillium brasilianum austinoid biosynthesis clusters is acetoxydehydroaustin (PubMed:29076725).</text>
</comment>
<comment type="pathway">
    <text evidence="5">Secondary metabolite biosynthesis; terpenoid biosynthesis.</text>
</comment>
<comment type="subunit">
    <text evidence="1">Homodimer.</text>
</comment>
<comment type="miscellaneous">
    <text evidence="5">In A.calidoustus, the austinoid gene cluster lies on a contiguous DNA region, while clusters from E.nidulans and P.brasilianum are split in their respective genomes. Genetic rearrangements provoked variability among the clusters and E.nidulans produces the least number of austionoid derivatives with the end products austinol and dehydroaustinol, while P.brasilianum can produce until acetoxydehydroaustin, and A.calidoustus produces the highest number of identified derivatives.</text>
</comment>
<comment type="similarity">
    <text evidence="4">Belongs to the trt14 isomerase family.</text>
</comment>
<evidence type="ECO:0000250" key="1">
    <source>
        <dbReference type="UniProtKB" id="Q5AR31"/>
    </source>
</evidence>
<evidence type="ECO:0000269" key="2">
    <source>
    </source>
</evidence>
<evidence type="ECO:0000303" key="3">
    <source>
    </source>
</evidence>
<evidence type="ECO:0000305" key="4"/>
<evidence type="ECO:0000305" key="5">
    <source>
    </source>
</evidence>
<organism>
    <name type="scientific">Penicillium brasilianum</name>
    <dbReference type="NCBI Taxonomy" id="104259"/>
    <lineage>
        <taxon>Eukaryota</taxon>
        <taxon>Fungi</taxon>
        <taxon>Dikarya</taxon>
        <taxon>Ascomycota</taxon>
        <taxon>Pezizomycotina</taxon>
        <taxon>Eurotiomycetes</taxon>
        <taxon>Eurotiomycetidae</taxon>
        <taxon>Eurotiales</taxon>
        <taxon>Aspergillaceae</taxon>
        <taxon>Penicillium</taxon>
    </lineage>
</organism>
<protein>
    <recommendedName>
        <fullName evidence="3">Austinoid biosynthesis clusters protein H</fullName>
    </recommendedName>
</protein>